<name>TRPD_BREBN</name>
<evidence type="ECO:0000255" key="1">
    <source>
        <dbReference type="HAMAP-Rule" id="MF_00211"/>
    </source>
</evidence>
<keyword id="KW-0028">Amino-acid biosynthesis</keyword>
<keyword id="KW-0057">Aromatic amino acid biosynthesis</keyword>
<keyword id="KW-0328">Glycosyltransferase</keyword>
<keyword id="KW-0460">Magnesium</keyword>
<keyword id="KW-0479">Metal-binding</keyword>
<keyword id="KW-1185">Reference proteome</keyword>
<keyword id="KW-0808">Transferase</keyword>
<keyword id="KW-0822">Tryptophan biosynthesis</keyword>
<dbReference type="EC" id="2.4.2.18" evidence="1"/>
<dbReference type="EMBL" id="AP008955">
    <property type="protein sequence ID" value="BAH43451.1"/>
    <property type="molecule type" value="Genomic_DNA"/>
</dbReference>
<dbReference type="RefSeq" id="WP_012686158.1">
    <property type="nucleotide sequence ID" value="NC_012491.1"/>
</dbReference>
<dbReference type="SMR" id="C0ZCE2"/>
<dbReference type="STRING" id="358681.BBR47_24740"/>
<dbReference type="KEGG" id="bbe:BBR47_24740"/>
<dbReference type="eggNOG" id="COG0547">
    <property type="taxonomic scope" value="Bacteria"/>
</dbReference>
<dbReference type="HOGENOM" id="CLU_034315_2_1_9"/>
<dbReference type="UniPathway" id="UPA00035">
    <property type="reaction ID" value="UER00041"/>
</dbReference>
<dbReference type="Proteomes" id="UP000001877">
    <property type="component" value="Chromosome"/>
</dbReference>
<dbReference type="GO" id="GO:0005829">
    <property type="term" value="C:cytosol"/>
    <property type="evidence" value="ECO:0007669"/>
    <property type="project" value="TreeGrafter"/>
</dbReference>
<dbReference type="GO" id="GO:0004048">
    <property type="term" value="F:anthranilate phosphoribosyltransferase activity"/>
    <property type="evidence" value="ECO:0007669"/>
    <property type="project" value="UniProtKB-UniRule"/>
</dbReference>
<dbReference type="GO" id="GO:0000287">
    <property type="term" value="F:magnesium ion binding"/>
    <property type="evidence" value="ECO:0007669"/>
    <property type="project" value="UniProtKB-UniRule"/>
</dbReference>
<dbReference type="GO" id="GO:0000162">
    <property type="term" value="P:L-tryptophan biosynthetic process"/>
    <property type="evidence" value="ECO:0007669"/>
    <property type="project" value="UniProtKB-UniRule"/>
</dbReference>
<dbReference type="FunFam" id="3.40.1030.10:FF:000002">
    <property type="entry name" value="Anthranilate phosphoribosyltransferase"/>
    <property type="match status" value="1"/>
</dbReference>
<dbReference type="Gene3D" id="3.40.1030.10">
    <property type="entry name" value="Nucleoside phosphorylase/phosphoribosyltransferase catalytic domain"/>
    <property type="match status" value="1"/>
</dbReference>
<dbReference type="Gene3D" id="1.20.970.10">
    <property type="entry name" value="Transferase, Pyrimidine Nucleoside Phosphorylase, Chain C"/>
    <property type="match status" value="1"/>
</dbReference>
<dbReference type="HAMAP" id="MF_00211">
    <property type="entry name" value="TrpD"/>
    <property type="match status" value="1"/>
</dbReference>
<dbReference type="InterPro" id="IPR005940">
    <property type="entry name" value="Anthranilate_Pribosyl_Tfrase"/>
</dbReference>
<dbReference type="InterPro" id="IPR000312">
    <property type="entry name" value="Glycosyl_Trfase_fam3"/>
</dbReference>
<dbReference type="InterPro" id="IPR017459">
    <property type="entry name" value="Glycosyl_Trfase_fam3_N_dom"/>
</dbReference>
<dbReference type="InterPro" id="IPR036320">
    <property type="entry name" value="Glycosyl_Trfase_fam3_N_dom_sf"/>
</dbReference>
<dbReference type="InterPro" id="IPR035902">
    <property type="entry name" value="Nuc_phospho_transferase"/>
</dbReference>
<dbReference type="NCBIfam" id="TIGR01245">
    <property type="entry name" value="trpD"/>
    <property type="match status" value="1"/>
</dbReference>
<dbReference type="PANTHER" id="PTHR43285">
    <property type="entry name" value="ANTHRANILATE PHOSPHORIBOSYLTRANSFERASE"/>
    <property type="match status" value="1"/>
</dbReference>
<dbReference type="PANTHER" id="PTHR43285:SF2">
    <property type="entry name" value="ANTHRANILATE PHOSPHORIBOSYLTRANSFERASE"/>
    <property type="match status" value="1"/>
</dbReference>
<dbReference type="Pfam" id="PF02885">
    <property type="entry name" value="Glycos_trans_3N"/>
    <property type="match status" value="1"/>
</dbReference>
<dbReference type="Pfam" id="PF00591">
    <property type="entry name" value="Glycos_transf_3"/>
    <property type="match status" value="1"/>
</dbReference>
<dbReference type="SUPFAM" id="SSF52418">
    <property type="entry name" value="Nucleoside phosphorylase/phosphoribosyltransferase catalytic domain"/>
    <property type="match status" value="1"/>
</dbReference>
<dbReference type="SUPFAM" id="SSF47648">
    <property type="entry name" value="Nucleoside phosphorylase/phosphoribosyltransferase N-terminal domain"/>
    <property type="match status" value="1"/>
</dbReference>
<organism>
    <name type="scientific">Brevibacillus brevis (strain 47 / JCM 6285 / NBRC 100599)</name>
    <dbReference type="NCBI Taxonomy" id="358681"/>
    <lineage>
        <taxon>Bacteria</taxon>
        <taxon>Bacillati</taxon>
        <taxon>Bacillota</taxon>
        <taxon>Bacilli</taxon>
        <taxon>Bacillales</taxon>
        <taxon>Paenibacillaceae</taxon>
        <taxon>Brevibacillus</taxon>
    </lineage>
</organism>
<comment type="function">
    <text evidence="1">Catalyzes the transfer of the phosphoribosyl group of 5-phosphorylribose-1-pyrophosphate (PRPP) to anthranilate to yield N-(5'-phosphoribosyl)-anthranilate (PRA).</text>
</comment>
<comment type="catalytic activity">
    <reaction evidence="1">
        <text>N-(5-phospho-beta-D-ribosyl)anthranilate + diphosphate = 5-phospho-alpha-D-ribose 1-diphosphate + anthranilate</text>
        <dbReference type="Rhea" id="RHEA:11768"/>
        <dbReference type="ChEBI" id="CHEBI:16567"/>
        <dbReference type="ChEBI" id="CHEBI:18277"/>
        <dbReference type="ChEBI" id="CHEBI:33019"/>
        <dbReference type="ChEBI" id="CHEBI:58017"/>
        <dbReference type="EC" id="2.4.2.18"/>
    </reaction>
</comment>
<comment type="cofactor">
    <cofactor evidence="1">
        <name>Mg(2+)</name>
        <dbReference type="ChEBI" id="CHEBI:18420"/>
    </cofactor>
    <text evidence="1">Binds 2 magnesium ions per monomer.</text>
</comment>
<comment type="pathway">
    <text evidence="1">Amino-acid biosynthesis; L-tryptophan biosynthesis; L-tryptophan from chorismate: step 2/5.</text>
</comment>
<comment type="subunit">
    <text evidence="1">Homodimer.</text>
</comment>
<comment type="similarity">
    <text evidence="1">Belongs to the anthranilate phosphoribosyltransferase family.</text>
</comment>
<reference key="1">
    <citation type="submission" date="2005-03" db="EMBL/GenBank/DDBJ databases">
        <title>Brevibacillus brevis strain 47, complete genome.</title>
        <authorList>
            <person name="Hosoyama A."/>
            <person name="Yamada R."/>
            <person name="Hongo Y."/>
            <person name="Terui Y."/>
            <person name="Ankai A."/>
            <person name="Masuyama W."/>
            <person name="Sekiguchi M."/>
            <person name="Takeda T."/>
            <person name="Asano K."/>
            <person name="Ohji S."/>
            <person name="Ichikawa N."/>
            <person name="Narita S."/>
            <person name="Aoki N."/>
            <person name="Miura H."/>
            <person name="Matsushita S."/>
            <person name="Sekigawa T."/>
            <person name="Yamagata H."/>
            <person name="Yoshikawa H."/>
            <person name="Udaka S."/>
            <person name="Tanikawa S."/>
            <person name="Fujita N."/>
        </authorList>
    </citation>
    <scope>NUCLEOTIDE SEQUENCE [LARGE SCALE GENOMIC DNA]</scope>
    <source>
        <strain>47 / JCM 6285 / NBRC 100599</strain>
    </source>
</reference>
<gene>
    <name evidence="1" type="primary">trpD</name>
    <name type="ordered locus">BBR47_24740</name>
</gene>
<protein>
    <recommendedName>
        <fullName evidence="1">Anthranilate phosphoribosyltransferase</fullName>
        <ecNumber evidence="1">2.4.2.18</ecNumber>
    </recommendedName>
</protein>
<sequence length="341" mass="36097">MLTYALEQILLGKHLTRTVAEEAMGEIMDGKATPAQIGAFLASLRLKGEQVEEIIGFAKAMRARAMNFPIELPGLVDTCGTGGDGSHTFNISTASAVVAAADGVRIAKHGNRAVSSKSGSADVLEALGVPVNLSPKDAADCLRATNLCFLFAPLYHQAMKHAAGPRKELAIRTVFNLLGPLTNPAGASHQLMGVYDAKLLPNVAAVLHELDVKRALVVAGSDGLDELTVTGTSHIAELRDGRILTYEIEPEQFGLRRHEKDALRGGDANENAKIIHDVFSGARGAARDIVLLNAGAILYLADRVSSIETGVIRAAELIDGGLVMRKLEHVRHIAGGMIHAS</sequence>
<accession>C0ZCE2</accession>
<feature type="chain" id="PRO_1000198807" description="Anthranilate phosphoribosyltransferase">
    <location>
        <begin position="1"/>
        <end position="341"/>
    </location>
</feature>
<feature type="binding site" evidence="1">
    <location>
        <position position="80"/>
    </location>
    <ligand>
        <name>5-phospho-alpha-D-ribose 1-diphosphate</name>
        <dbReference type="ChEBI" id="CHEBI:58017"/>
    </ligand>
</feature>
<feature type="binding site" evidence="1">
    <location>
        <position position="80"/>
    </location>
    <ligand>
        <name>anthranilate</name>
        <dbReference type="ChEBI" id="CHEBI:16567"/>
        <label>1</label>
    </ligand>
</feature>
<feature type="binding site" evidence="1">
    <location>
        <begin position="83"/>
        <end position="84"/>
    </location>
    <ligand>
        <name>5-phospho-alpha-D-ribose 1-diphosphate</name>
        <dbReference type="ChEBI" id="CHEBI:58017"/>
    </ligand>
</feature>
<feature type="binding site" evidence="1">
    <location>
        <position position="88"/>
    </location>
    <ligand>
        <name>5-phospho-alpha-D-ribose 1-diphosphate</name>
        <dbReference type="ChEBI" id="CHEBI:58017"/>
    </ligand>
</feature>
<feature type="binding site" evidence="1">
    <location>
        <begin position="90"/>
        <end position="93"/>
    </location>
    <ligand>
        <name>5-phospho-alpha-D-ribose 1-diphosphate</name>
        <dbReference type="ChEBI" id="CHEBI:58017"/>
    </ligand>
</feature>
<feature type="binding site" evidence="1">
    <location>
        <position position="92"/>
    </location>
    <ligand>
        <name>Mg(2+)</name>
        <dbReference type="ChEBI" id="CHEBI:18420"/>
        <label>1</label>
    </ligand>
</feature>
<feature type="binding site" evidence="1">
    <location>
        <begin position="108"/>
        <end position="116"/>
    </location>
    <ligand>
        <name>5-phospho-alpha-D-ribose 1-diphosphate</name>
        <dbReference type="ChEBI" id="CHEBI:58017"/>
    </ligand>
</feature>
<feature type="binding site" evidence="1">
    <location>
        <position position="111"/>
    </location>
    <ligand>
        <name>anthranilate</name>
        <dbReference type="ChEBI" id="CHEBI:16567"/>
        <label>1</label>
    </ligand>
</feature>
<feature type="binding site" evidence="1">
    <location>
        <position position="120"/>
    </location>
    <ligand>
        <name>5-phospho-alpha-D-ribose 1-diphosphate</name>
        <dbReference type="ChEBI" id="CHEBI:58017"/>
    </ligand>
</feature>
<feature type="binding site" evidence="1">
    <location>
        <position position="166"/>
    </location>
    <ligand>
        <name>anthranilate</name>
        <dbReference type="ChEBI" id="CHEBI:16567"/>
        <label>2</label>
    </ligand>
</feature>
<feature type="binding site" evidence="1">
    <location>
        <position position="225"/>
    </location>
    <ligand>
        <name>Mg(2+)</name>
        <dbReference type="ChEBI" id="CHEBI:18420"/>
        <label>2</label>
    </ligand>
</feature>
<feature type="binding site" evidence="1">
    <location>
        <position position="226"/>
    </location>
    <ligand>
        <name>Mg(2+)</name>
        <dbReference type="ChEBI" id="CHEBI:18420"/>
        <label>1</label>
    </ligand>
</feature>
<feature type="binding site" evidence="1">
    <location>
        <position position="226"/>
    </location>
    <ligand>
        <name>Mg(2+)</name>
        <dbReference type="ChEBI" id="CHEBI:18420"/>
        <label>2</label>
    </ligand>
</feature>
<proteinExistence type="inferred from homology"/>